<comment type="function">
    <text evidence="1 5">Auxiliary protein of DNA polymerase delta and is involved in the control of DNA replication by increasing the polymerase processibility during elongation of the leading strand (By similarity). Involved in DNA damage response (PubMed:26251451).</text>
</comment>
<comment type="subunit">
    <text evidence="3 4 5 6">Homotrimer (PubMed:26251451, PubMed:30052905). Interacts with ORC1 (via PIP-box motif); the interaction occurs during DNA replication in trophozoites (PubMed:18554328, PubMed:26251451). Interacts with ORC5; the interaction occurs during the trophozoite stage but not at the late schizont stage (PubMed:18554328, PubMed:19633266, PubMed:26251451). Interacts with FEN1 (PubMed:26251451).</text>
</comment>
<comment type="subcellular location">
    <subcellularLocation>
        <location evidence="3 4 5">Nucleus</location>
    </subcellularLocation>
    <subcellularLocation>
        <location evidence="5">Chromosome</location>
    </subcellularLocation>
    <subcellularLocation>
        <location evidence="5">Cytoplasm</location>
    </subcellularLocation>
    <text evidence="3 4 5">During early-to mid replicating trophozoite stages, colocalizes with ORC1 and ORC5 to distinct nuclear foci which probably are DNA replication origin sites (PubMed:18554328, PubMed:19633266, PubMed:26251451). Dissociates from ORC1 and ORC5 during the late schizont stage (PubMed:18554328, PubMed:19633266).</text>
</comment>
<comment type="developmental stage">
    <text evidence="3 4 5">Expressed during the asexual blood stage, specifically during the trophozoite and schizont stages (at protein level).</text>
</comment>
<comment type="induction">
    <text evidence="5">Induced by DNA damage (at protein level).</text>
</comment>
<comment type="similarity">
    <text evidence="8">Belongs to the PCNA family.</text>
</comment>
<keyword id="KW-0158">Chromosome</keyword>
<keyword id="KW-0963">Cytoplasm</keyword>
<keyword id="KW-0235">DNA replication</keyword>
<keyword id="KW-0238">DNA-binding</keyword>
<keyword id="KW-0539">Nucleus</keyword>
<keyword id="KW-1185">Reference proteome</keyword>
<protein>
    <recommendedName>
        <fullName evidence="7">Proliferating cell nuclear antigen 1</fullName>
        <shortName evidence="7">PfPCNA1</shortName>
    </recommendedName>
</protein>
<reference key="1">
    <citation type="journal article" date="2002" name="Nature">
        <title>Genome sequence of the human malaria parasite Plasmodium falciparum.</title>
        <authorList>
            <person name="Gardner M.J."/>
            <person name="Hall N."/>
            <person name="Fung E."/>
            <person name="White O."/>
            <person name="Berriman M."/>
            <person name="Hyman R.W."/>
            <person name="Carlton J.M."/>
            <person name="Pain A."/>
            <person name="Nelson K.E."/>
            <person name="Bowman S."/>
            <person name="Paulsen I.T."/>
            <person name="James K.D."/>
            <person name="Eisen J.A."/>
            <person name="Rutherford K.M."/>
            <person name="Salzberg S.L."/>
            <person name="Craig A."/>
            <person name="Kyes S."/>
            <person name="Chan M.-S."/>
            <person name="Nene V."/>
            <person name="Shallom S.J."/>
            <person name="Suh B."/>
            <person name="Peterson J."/>
            <person name="Angiuoli S."/>
            <person name="Pertea M."/>
            <person name="Allen J."/>
            <person name="Selengut J."/>
            <person name="Haft D."/>
            <person name="Mather M.W."/>
            <person name="Vaidya A.B."/>
            <person name="Martin D.M.A."/>
            <person name="Fairlamb A.H."/>
            <person name="Fraunholz M.J."/>
            <person name="Roos D.S."/>
            <person name="Ralph S.A."/>
            <person name="McFadden G.I."/>
            <person name="Cummings L.M."/>
            <person name="Subramanian G.M."/>
            <person name="Mungall C."/>
            <person name="Venter J.C."/>
            <person name="Carucci D.J."/>
            <person name="Hoffman S.L."/>
            <person name="Newbold C."/>
            <person name="Davis R.W."/>
            <person name="Fraser C.M."/>
            <person name="Barrell B.G."/>
        </authorList>
    </citation>
    <scope>NUCLEOTIDE SEQUENCE [LARGE SCALE GENOMIC DNA]</scope>
    <source>
        <strain>3D7</strain>
    </source>
</reference>
<reference key="2">
    <citation type="journal article" date="2002" name="Nature">
        <title>Sequence of Plasmodium falciparum chromosomes 1, 3-9 and 13.</title>
        <authorList>
            <person name="Hall N."/>
            <person name="Pain A."/>
            <person name="Berriman M."/>
            <person name="Churcher C.M."/>
            <person name="Harris B."/>
            <person name="Harris D."/>
            <person name="Mungall K.L."/>
            <person name="Bowman S."/>
            <person name="Atkin R."/>
            <person name="Baker S."/>
            <person name="Barron A."/>
            <person name="Brooks K."/>
            <person name="Buckee C.O."/>
            <person name="Burrows C."/>
            <person name="Cherevach I."/>
            <person name="Chillingworth C."/>
            <person name="Chillingworth T."/>
            <person name="Christodoulou Z."/>
            <person name="Clark L."/>
            <person name="Clark R."/>
            <person name="Corton C."/>
            <person name="Cronin A."/>
            <person name="Davies R.M."/>
            <person name="Davis P."/>
            <person name="Dear P."/>
            <person name="Dearden F."/>
            <person name="Doggett J."/>
            <person name="Feltwell T."/>
            <person name="Goble A."/>
            <person name="Goodhead I."/>
            <person name="Gwilliam R."/>
            <person name="Hamlin N."/>
            <person name="Hance Z."/>
            <person name="Harper D."/>
            <person name="Hauser H."/>
            <person name="Hornsby T."/>
            <person name="Holroyd S."/>
            <person name="Horrocks P."/>
            <person name="Humphray S."/>
            <person name="Jagels K."/>
            <person name="James K.D."/>
            <person name="Johnson D."/>
            <person name="Kerhornou A."/>
            <person name="Knights A."/>
            <person name="Konfortov B."/>
            <person name="Kyes S."/>
            <person name="Larke N."/>
            <person name="Lawson D."/>
            <person name="Lennard N."/>
            <person name="Line A."/>
            <person name="Maddison M."/>
            <person name="Mclean J."/>
            <person name="Mooney P."/>
            <person name="Moule S."/>
            <person name="Murphy L."/>
            <person name="Oliver K."/>
            <person name="Ormond D."/>
            <person name="Price C."/>
            <person name="Quail M.A."/>
            <person name="Rabbinowitsch E."/>
            <person name="Rajandream M.A."/>
            <person name="Rutter S."/>
            <person name="Rutherford K.M."/>
            <person name="Sanders M."/>
            <person name="Simmonds M."/>
            <person name="Seeger K."/>
            <person name="Sharp S."/>
            <person name="Smith R."/>
            <person name="Squares R."/>
            <person name="Squares S."/>
            <person name="Stevens K."/>
            <person name="Taylor K."/>
            <person name="Tivey A."/>
            <person name="Unwin L."/>
            <person name="Whitehead S."/>
            <person name="Woodward J.R."/>
            <person name="Sulston J.E."/>
            <person name="Craig A."/>
            <person name="Newbold C."/>
            <person name="Barrell B.G."/>
        </authorList>
    </citation>
    <scope>NUCLEOTIDE SEQUENCE [LARGE SCALE GENOMIC DNA]</scope>
    <source>
        <strain>3D7</strain>
    </source>
</reference>
<reference key="3">
    <citation type="journal article" date="2008" name="Mol. Microbiol.">
        <title>Plasmodium falciparum origin recognition complex subunit 5: functional characterization and role in DNA replication foci formation.</title>
        <authorList>
            <person name="Gupta A."/>
            <person name="Mehra P."/>
            <person name="Dhar S.K."/>
        </authorList>
    </citation>
    <scope>INTERACTION WITH ORC1 AND ORC5</scope>
    <scope>SUBCELLULAR LOCATION</scope>
    <scope>DEVELOPMENTAL STAGE</scope>
</reference>
<reference key="4">
    <citation type="journal article" date="2009" name="Eukaryot. Cell">
        <title>Functional dissection of the catalytic carboxyl-terminal domain of origin recognition complex subunit 1 (PfORC1) of the human malaria parasite Plasmodium falciparum.</title>
        <authorList>
            <person name="Gupta A."/>
            <person name="Mehra P."/>
            <person name="Deshmukh A."/>
            <person name="Dar A."/>
            <person name="Mitra P."/>
            <person name="Roy N."/>
            <person name="Dhar S.K."/>
        </authorList>
    </citation>
    <scope>INTERACTION WITH ORC1</scope>
    <scope>SUBCELLULAR LOCATION</scope>
    <scope>DEVELOPMENTAL STAGE</scope>
</reference>
<reference key="5">
    <citation type="journal article" date="2015" name="Biochem. J.">
        <title>Functional dissection of proliferating-cell nuclear antigens (1 and 2) in human malarial parasite Plasmodium falciparum: possible involvement in DNA replication and DNA damage response.</title>
        <authorList>
            <person name="Mitra P."/>
            <person name="Banu K."/>
            <person name="Deshmukh A.S."/>
            <person name="Subbarao N."/>
            <person name="Dhar S.K."/>
        </authorList>
    </citation>
    <scope>FUNCTION</scope>
    <scope>SUBUNIT</scope>
    <scope>INTERACTION WITH ORC1 AND FEN1</scope>
    <scope>SUBCELLULAR LOCATION</scope>
    <scope>DEVELOPMENTAL STAGE</scope>
    <scope>INDUCTION</scope>
</reference>
<reference key="6">
    <citation type="journal article" date="2018" name="FEMS Microbiol. Lett.">
        <title>Role of tyrosine residue (Y213) in nuclear retention of PCNA1 in human malaria parasite Plasmodium falciparum.</title>
        <authorList>
            <person name="Banu K."/>
            <person name="Mitra P."/>
            <person name="Subbarao N."/>
            <person name="Dhar S.K."/>
        </authorList>
    </citation>
    <scope>SUBUNIT</scope>
    <scope>MUTAGENESIS OF SER-191 AND TYR-213</scope>
</reference>
<organism>
    <name type="scientific">Plasmodium falciparum (isolate 3D7)</name>
    <dbReference type="NCBI Taxonomy" id="36329"/>
    <lineage>
        <taxon>Eukaryota</taxon>
        <taxon>Sar</taxon>
        <taxon>Alveolata</taxon>
        <taxon>Apicomplexa</taxon>
        <taxon>Aconoidasida</taxon>
        <taxon>Haemosporida</taxon>
        <taxon>Plasmodiidae</taxon>
        <taxon>Plasmodium</taxon>
        <taxon>Plasmodium (Laverania)</taxon>
    </lineage>
</organism>
<gene>
    <name evidence="7" type="primary">PCNA1</name>
    <name evidence="7" type="synonym">PCNA</name>
    <name type="ORF">PF13_0328</name>
    <name type="ORF">PF3D7_1361900</name>
</gene>
<feature type="chain" id="PRO_0000149173" description="Proliferating cell nuclear antigen 1">
    <location>
        <begin position="1"/>
        <end position="274"/>
    </location>
</feature>
<feature type="DNA-binding region" evidence="2">
    <location>
        <begin position="61"/>
        <end position="80"/>
    </location>
</feature>
<feature type="site" description="May be important for nuclear localization" evidence="9">
    <location>
        <position position="213"/>
    </location>
</feature>
<feature type="mutagenesis site" description="No effect on homotrimerization and stability. Slight reduction in protein stability; when associated with F-213." evidence="6">
    <original>S</original>
    <variation>A</variation>
    <location>
        <position position="191"/>
    </location>
</feature>
<feature type="mutagenesis site" description="No effect on homotrimerization and stability. Slight reduction in protein stability; when associated with A-191." evidence="6">
    <original>Y</original>
    <variation>F</variation>
    <location>
        <position position="213"/>
    </location>
</feature>
<evidence type="ECO:0000250" key="1">
    <source>
        <dbReference type="UniProtKB" id="P31008"/>
    </source>
</evidence>
<evidence type="ECO:0000255" key="2"/>
<evidence type="ECO:0000269" key="3">
    <source>
    </source>
</evidence>
<evidence type="ECO:0000269" key="4">
    <source>
    </source>
</evidence>
<evidence type="ECO:0000269" key="5">
    <source>
    </source>
</evidence>
<evidence type="ECO:0000269" key="6">
    <source>
    </source>
</evidence>
<evidence type="ECO:0000303" key="7">
    <source>
    </source>
</evidence>
<evidence type="ECO:0000305" key="8"/>
<evidence type="ECO:0000305" key="9">
    <source>
    </source>
</evidence>
<dbReference type="EMBL" id="AL844509">
    <property type="protein sequence ID" value="VWP77936.1"/>
    <property type="molecule type" value="Genomic_DNA"/>
</dbReference>
<dbReference type="RefSeq" id="XP_001350330.1">
    <property type="nucleotide sequence ID" value="XM_001350294.1"/>
</dbReference>
<dbReference type="SMR" id="P61074"/>
<dbReference type="FunCoup" id="P61074">
    <property type="interactions" value="596"/>
</dbReference>
<dbReference type="STRING" id="36329.P61074"/>
<dbReference type="SwissPalm" id="P61074"/>
<dbReference type="PaxDb" id="5833-PF13_0328"/>
<dbReference type="EnsemblProtists" id="CAD52739">
    <property type="protein sequence ID" value="CAD52739"/>
    <property type="gene ID" value="PF3D7_1361900"/>
</dbReference>
<dbReference type="GeneID" id="814288"/>
<dbReference type="KEGG" id="pfa:PF3D7_1361900"/>
<dbReference type="VEuPathDB" id="PlasmoDB:PF3D7_1361900"/>
<dbReference type="HOGENOM" id="CLU_043978_3_0_1"/>
<dbReference type="InParanoid" id="P61074"/>
<dbReference type="OMA" id="EMKLINM"/>
<dbReference type="OrthoDB" id="534348at2759"/>
<dbReference type="PhylomeDB" id="P61074"/>
<dbReference type="Reactome" id="R-PFA-110312">
    <property type="pathway name" value="Translesion synthesis by REV1"/>
</dbReference>
<dbReference type="Reactome" id="R-PFA-110314">
    <property type="pathway name" value="Recognition of DNA damage by PCNA-containing replication complex"/>
</dbReference>
<dbReference type="Reactome" id="R-PFA-110320">
    <property type="pathway name" value="Translesion Synthesis by POLH"/>
</dbReference>
<dbReference type="Reactome" id="R-PFA-4615885">
    <property type="pathway name" value="SUMOylation of DNA replication proteins"/>
</dbReference>
<dbReference type="Reactome" id="R-PFA-5358565">
    <property type="pathway name" value="Mismatch repair (MMR) directed by MSH2:MSH6 (MutSalpha)"/>
</dbReference>
<dbReference type="Reactome" id="R-PFA-5651801">
    <property type="pathway name" value="PCNA-Dependent Long Patch Base Excision Repair"/>
</dbReference>
<dbReference type="Reactome" id="R-PFA-5655862">
    <property type="pathway name" value="Translesion synthesis by POLK"/>
</dbReference>
<dbReference type="Reactome" id="R-PFA-5656121">
    <property type="pathway name" value="Translesion synthesis by POLI"/>
</dbReference>
<dbReference type="Reactome" id="R-PFA-5656169">
    <property type="pathway name" value="Termination of translesion DNA synthesis"/>
</dbReference>
<dbReference type="Reactome" id="R-PFA-5696400">
    <property type="pathway name" value="Dual Incision in GG-NER"/>
</dbReference>
<dbReference type="Reactome" id="R-PFA-6782135">
    <property type="pathway name" value="Dual incision in TC-NER"/>
</dbReference>
<dbReference type="Reactome" id="R-PFA-69091">
    <property type="pathway name" value="Polymerase switching"/>
</dbReference>
<dbReference type="Reactome" id="R-PFA-69166">
    <property type="pathway name" value="Removal of the Flap Intermediate"/>
</dbReference>
<dbReference type="Reactome" id="R-PFA-69183">
    <property type="pathway name" value="Processive synthesis on the lagging strand"/>
</dbReference>
<dbReference type="Proteomes" id="UP000001450">
    <property type="component" value="Chromosome 13"/>
</dbReference>
<dbReference type="GO" id="GO:0005694">
    <property type="term" value="C:chromosome"/>
    <property type="evidence" value="ECO:0007669"/>
    <property type="project" value="UniProtKB-SubCell"/>
</dbReference>
<dbReference type="GO" id="GO:0005737">
    <property type="term" value="C:cytoplasm"/>
    <property type="evidence" value="ECO:0007669"/>
    <property type="project" value="UniProtKB-SubCell"/>
</dbReference>
<dbReference type="GO" id="GO:0005634">
    <property type="term" value="C:nucleus"/>
    <property type="evidence" value="ECO:0000314"/>
    <property type="project" value="UniProtKB"/>
</dbReference>
<dbReference type="GO" id="GO:0043626">
    <property type="term" value="C:PCNA complex"/>
    <property type="evidence" value="ECO:0000318"/>
    <property type="project" value="GO_Central"/>
</dbReference>
<dbReference type="GO" id="GO:0003677">
    <property type="term" value="F:DNA binding"/>
    <property type="evidence" value="ECO:0007669"/>
    <property type="project" value="UniProtKB-KW"/>
</dbReference>
<dbReference type="GO" id="GO:0030337">
    <property type="term" value="F:DNA polymerase processivity factor activity"/>
    <property type="evidence" value="ECO:0000318"/>
    <property type="project" value="GO_Central"/>
</dbReference>
<dbReference type="GO" id="GO:0006272">
    <property type="term" value="P:leading strand elongation"/>
    <property type="evidence" value="ECO:0000318"/>
    <property type="project" value="GO_Central"/>
</dbReference>
<dbReference type="GO" id="GO:0006298">
    <property type="term" value="P:mismatch repair"/>
    <property type="evidence" value="ECO:0000318"/>
    <property type="project" value="GO_Central"/>
</dbReference>
<dbReference type="GO" id="GO:0045739">
    <property type="term" value="P:positive regulation of DNA repair"/>
    <property type="evidence" value="ECO:0000314"/>
    <property type="project" value="UniProtKB"/>
</dbReference>
<dbReference type="GO" id="GO:0006275">
    <property type="term" value="P:regulation of DNA replication"/>
    <property type="evidence" value="ECO:0007669"/>
    <property type="project" value="InterPro"/>
</dbReference>
<dbReference type="GO" id="GO:0019985">
    <property type="term" value="P:translesion synthesis"/>
    <property type="evidence" value="ECO:0000318"/>
    <property type="project" value="GO_Central"/>
</dbReference>
<dbReference type="CDD" id="cd00577">
    <property type="entry name" value="PCNA"/>
    <property type="match status" value="1"/>
</dbReference>
<dbReference type="FunFam" id="3.10.150.10:FF:000006">
    <property type="entry name" value="Proliferating cell nuclear antigen"/>
    <property type="match status" value="1"/>
</dbReference>
<dbReference type="FunFam" id="3.10.150.10:FF:000010">
    <property type="entry name" value="Proliferating cell nuclear antigen"/>
    <property type="match status" value="1"/>
</dbReference>
<dbReference type="Gene3D" id="3.10.150.10">
    <property type="entry name" value="DNA Polymerase III, subunit A, domain 2"/>
    <property type="match status" value="2"/>
</dbReference>
<dbReference type="HAMAP" id="MF_00317">
    <property type="entry name" value="DNApol_clamp_arch"/>
    <property type="match status" value="1"/>
</dbReference>
<dbReference type="InterPro" id="IPR046938">
    <property type="entry name" value="DNA_clamp_sf"/>
</dbReference>
<dbReference type="InterPro" id="IPR000730">
    <property type="entry name" value="Pr_cel_nuc_antig"/>
</dbReference>
<dbReference type="InterPro" id="IPR022649">
    <property type="entry name" value="Pr_cel_nuc_antig_C"/>
</dbReference>
<dbReference type="InterPro" id="IPR022659">
    <property type="entry name" value="Pr_cel_nuc_antig_CS"/>
</dbReference>
<dbReference type="InterPro" id="IPR022648">
    <property type="entry name" value="Pr_cel_nuc_antig_N"/>
</dbReference>
<dbReference type="NCBIfam" id="TIGR00590">
    <property type="entry name" value="pcna"/>
    <property type="match status" value="1"/>
</dbReference>
<dbReference type="PANTHER" id="PTHR11352">
    <property type="entry name" value="PROLIFERATING CELL NUCLEAR ANTIGEN"/>
    <property type="match status" value="1"/>
</dbReference>
<dbReference type="PANTHER" id="PTHR11352:SF0">
    <property type="entry name" value="PROLIFERATING CELL NUCLEAR ANTIGEN"/>
    <property type="match status" value="1"/>
</dbReference>
<dbReference type="Pfam" id="PF02747">
    <property type="entry name" value="PCNA_C"/>
    <property type="match status" value="1"/>
</dbReference>
<dbReference type="Pfam" id="PF00705">
    <property type="entry name" value="PCNA_N"/>
    <property type="match status" value="1"/>
</dbReference>
<dbReference type="PRINTS" id="PR00339">
    <property type="entry name" value="PCNACYCLIN"/>
</dbReference>
<dbReference type="SUPFAM" id="SSF55979">
    <property type="entry name" value="DNA clamp"/>
    <property type="match status" value="2"/>
</dbReference>
<dbReference type="PROSITE" id="PS01251">
    <property type="entry name" value="PCNA_1"/>
    <property type="match status" value="1"/>
</dbReference>
<dbReference type="PROSITE" id="PS00293">
    <property type="entry name" value="PCNA_2"/>
    <property type="match status" value="1"/>
</dbReference>
<name>PCNA1_PLAF7</name>
<accession>P61074</accession>
<accession>A0A5K1K8U9</accession>
<sequence length="274" mass="30587">MLEAKLNNASILKKLFECIKDLVNDANVDADESGLKLQALDGNHVSLVSLHLLDSGFSHYRCDRERVLGVNIASLNKVFKLCGANESVVISSKDDEDNLNFVFENNKEDKVTNFSLKLMSIELDSLNIPDCEEGFDAEVELSSKELTNIFRNLSEFSDTVFIEIDSNCIKFTTKGIVGDAEVALKPRDSTSEDDIGVTIKSKKKIKQSFAIKYLNLFSKSNILADVVVLGLSDSRPIEFKYEIKDTSPDSDTLKIGFVKFFLAPKMDDDMDNKD</sequence>
<proteinExistence type="evidence at protein level"/>